<feature type="chain" id="PRO_0000293684" description="Probable succinate transporter subunit YjjB">
    <location>
        <begin position="1"/>
        <end position="153"/>
    </location>
</feature>
<feature type="transmembrane region" description="Helical" evidence="1">
    <location>
        <begin position="7"/>
        <end position="27"/>
    </location>
</feature>
<feature type="transmembrane region" description="Helical" evidence="1">
    <location>
        <begin position="51"/>
        <end position="71"/>
    </location>
</feature>
<feature type="transmembrane region" description="Helical" evidence="1">
    <location>
        <begin position="83"/>
        <end position="103"/>
    </location>
</feature>
<feature type="transmembrane region" description="Helical" evidence="1">
    <location>
        <begin position="125"/>
        <end position="145"/>
    </location>
</feature>
<organism>
    <name type="scientific">Yersinia pestis bv. Antiqua (strain Nepal516)</name>
    <dbReference type="NCBI Taxonomy" id="377628"/>
    <lineage>
        <taxon>Bacteria</taxon>
        <taxon>Pseudomonadati</taxon>
        <taxon>Pseudomonadota</taxon>
        <taxon>Gammaproteobacteria</taxon>
        <taxon>Enterobacterales</taxon>
        <taxon>Yersiniaceae</taxon>
        <taxon>Yersinia</taxon>
    </lineage>
</organism>
<reference key="1">
    <citation type="journal article" date="2006" name="J. Bacteriol.">
        <title>Complete genome sequence of Yersinia pestis strains Antiqua and Nepal516: evidence of gene reduction in an emerging pathogen.</title>
        <authorList>
            <person name="Chain P.S.G."/>
            <person name="Hu P."/>
            <person name="Malfatti S.A."/>
            <person name="Radnedge L."/>
            <person name="Larimer F."/>
            <person name="Vergez L.M."/>
            <person name="Worsham P."/>
            <person name="Chu M.C."/>
            <person name="Andersen G.L."/>
        </authorList>
    </citation>
    <scope>NUCLEOTIDE SEQUENCE [LARGE SCALE GENOMIC DNA]</scope>
    <source>
        <strain>Nepal516</strain>
    </source>
</reference>
<protein>
    <recommendedName>
        <fullName evidence="1">Probable succinate transporter subunit YjjB</fullName>
    </recommendedName>
</protein>
<keyword id="KW-0997">Cell inner membrane</keyword>
<keyword id="KW-1003">Cell membrane</keyword>
<keyword id="KW-0472">Membrane</keyword>
<keyword id="KW-0812">Transmembrane</keyword>
<keyword id="KW-1133">Transmembrane helix</keyword>
<keyword id="KW-0813">Transport</keyword>
<dbReference type="EMBL" id="CP000305">
    <property type="protein sequence ID" value="ABG16690.1"/>
    <property type="status" value="ALT_INIT"/>
    <property type="molecule type" value="Genomic_DNA"/>
</dbReference>
<dbReference type="KEGG" id="ypn:YPN_0358"/>
<dbReference type="HOGENOM" id="CLU_117642_1_0_6"/>
<dbReference type="Proteomes" id="UP000008936">
    <property type="component" value="Chromosome"/>
</dbReference>
<dbReference type="GO" id="GO:0005886">
    <property type="term" value="C:plasma membrane"/>
    <property type="evidence" value="ECO:0007669"/>
    <property type="project" value="UniProtKB-SubCell"/>
</dbReference>
<dbReference type="GO" id="GO:0015744">
    <property type="term" value="P:succinate transport"/>
    <property type="evidence" value="ECO:0007669"/>
    <property type="project" value="UniProtKB-UniRule"/>
</dbReference>
<dbReference type="HAMAP" id="MF_01191">
    <property type="entry name" value="YjjB"/>
    <property type="match status" value="1"/>
</dbReference>
<dbReference type="InterPro" id="IPR024528">
    <property type="entry name" value="ThrE_2"/>
</dbReference>
<dbReference type="InterPro" id="IPR050539">
    <property type="entry name" value="ThrE_Dicarb/AminoAcid_Exp"/>
</dbReference>
<dbReference type="InterPro" id="IPR020914">
    <property type="entry name" value="YjjB"/>
</dbReference>
<dbReference type="NCBIfam" id="NF007391">
    <property type="entry name" value="PRK09917.1"/>
    <property type="match status" value="1"/>
</dbReference>
<dbReference type="PANTHER" id="PTHR34390:SF1">
    <property type="entry name" value="SUCCINATE TRANSPORTER SUBUNIT YJJB-RELATED"/>
    <property type="match status" value="1"/>
</dbReference>
<dbReference type="PANTHER" id="PTHR34390">
    <property type="entry name" value="UPF0442 PROTEIN YJJB-RELATED"/>
    <property type="match status" value="1"/>
</dbReference>
<dbReference type="Pfam" id="PF12821">
    <property type="entry name" value="ThrE_2"/>
    <property type="match status" value="1"/>
</dbReference>
<sequence length="153" mass="16535">MGVSLLWALLQDMVLAAIPALGFAMVFNVPVRALRYCALLGAIGHGSRMLMIHFGMNIELASLVASIMIGINWSRWLLAHPKVFTVAAVIPMFPGISAYTAMISVVEISHLGYSEALMSTMVTNFLKASFIVGALSIGLSLPGLWLYRKRPGV</sequence>
<evidence type="ECO:0000255" key="1">
    <source>
        <dbReference type="HAMAP-Rule" id="MF_01191"/>
    </source>
</evidence>
<evidence type="ECO:0000305" key="2"/>
<proteinExistence type="inferred from homology"/>
<accession>Q1CMU0</accession>
<name>YJJB_YERPN</name>
<comment type="function">
    <text evidence="1">Involved in succinate export with YjjP. Both proteins are required for export.</text>
</comment>
<comment type="subunit">
    <text evidence="1">The transporter is composed of YjjB and YjjP.</text>
</comment>
<comment type="subcellular location">
    <subcellularLocation>
        <location evidence="1">Cell inner membrane</location>
        <topology evidence="1">Multi-pass membrane protein</topology>
    </subcellularLocation>
</comment>
<comment type="similarity">
    <text evidence="1">Belongs to the ThrE exporter (TC 2.A.79) family.</text>
</comment>
<comment type="sequence caution" evidence="2">
    <conflict type="erroneous initiation">
        <sequence resource="EMBL-CDS" id="ABG16690"/>
    </conflict>
</comment>
<gene>
    <name evidence="1" type="primary">yjjB</name>
    <name type="ordered locus">YPN_0358</name>
</gene>